<accession>P35646</accession>
<protein>
    <recommendedName>
        <fullName>Fimbrial protein EcpB</fullName>
    </recommendedName>
    <alternativeName>
        <fullName>Pilin</fullName>
    </alternativeName>
</protein>
<proteinExistence type="inferred from homology"/>
<organism>
    <name type="scientific">Eikenella corrodens</name>
    <dbReference type="NCBI Taxonomy" id="539"/>
    <lineage>
        <taxon>Bacteria</taxon>
        <taxon>Pseudomonadati</taxon>
        <taxon>Pseudomonadota</taxon>
        <taxon>Betaproteobacteria</taxon>
        <taxon>Neisseriales</taxon>
        <taxon>Neisseriaceae</taxon>
        <taxon>Eikenella</taxon>
    </lineage>
</organism>
<name>ECPB_EIKCO</name>
<reference key="1">
    <citation type="journal article" date="1993" name="J. Gen. Microbiol.">
        <title>Cloning and sequencing of two type 4 (N-methylphenylalanine) pilin genes from Eikenella corrodens.</title>
        <authorList>
            <person name="Rao V.K."/>
            <person name="Progulske-Fox A."/>
        </authorList>
    </citation>
    <scope>NUCLEOTIDE SEQUENCE [GENOMIC DNA]</scope>
    <source>
        <strain>ATCC 23834 / DSM 8340 / JCM 12952 / KCTC 15198 / LMG 15557 / NCTC 10596 / 333/54-55</strain>
    </source>
</reference>
<comment type="subcellular location">
    <subcellularLocation>
        <location>Fimbrium</location>
    </subcellularLocation>
    <subcellularLocation>
        <location evidence="2">Membrane</location>
        <topology evidence="2">Single-pass membrane protein</topology>
    </subcellularLocation>
</comment>
<comment type="similarity">
    <text evidence="4">Belongs to the N-Me-Phe pilin family.</text>
</comment>
<sequence length="159" mass="17387">MYKQKGFTLIELMIVIAIIGILAAIALPLYQDHMAKAQINRVFYELGSTKTAVESILAHGGIPTVDPSQDGVVQNSRRLEFLGLNQNPNSNLIFTASVGLNSNQFERVNATFGRNALPQIQGAVISFVRDNQGQWTCEIDKSNAAYCPPKYTPATCVTI</sequence>
<keyword id="KW-1015">Disulfide bond</keyword>
<keyword id="KW-0281">Fimbrium</keyword>
<keyword id="KW-0472">Membrane</keyword>
<keyword id="KW-0488">Methylation</keyword>
<keyword id="KW-0812">Transmembrane</keyword>
<keyword id="KW-1133">Transmembrane helix</keyword>
<evidence type="ECO:0000250" key="1"/>
<evidence type="ECO:0000255" key="2"/>
<evidence type="ECO:0000255" key="3">
    <source>
        <dbReference type="PROSITE-ProRule" id="PRU01070"/>
    </source>
</evidence>
<evidence type="ECO:0000305" key="4"/>
<feature type="propeptide" id="PRO_0000024184" description="Leader sequence" evidence="3">
    <location>
        <begin position="1"/>
        <end position="6"/>
    </location>
</feature>
<feature type="chain" id="PRO_0000024185" description="Fimbrial protein EcpB">
    <location>
        <begin position="7"/>
        <end position="159"/>
    </location>
</feature>
<feature type="transmembrane region" description="Helical" evidence="2">
    <location>
        <begin position="7"/>
        <end position="29"/>
    </location>
</feature>
<feature type="modified residue" description="N-methylphenylalanine" evidence="3">
    <location>
        <position position="7"/>
    </location>
</feature>
<feature type="disulfide bond" evidence="1">
    <location>
        <begin position="137"/>
        <end position="156"/>
    </location>
</feature>
<dbReference type="EMBL" id="Z12609">
    <property type="protein sequence ID" value="CAA78251.1"/>
    <property type="molecule type" value="Genomic_DNA"/>
</dbReference>
<dbReference type="PIR" id="B47699">
    <property type="entry name" value="B47699"/>
</dbReference>
<dbReference type="SMR" id="P35646"/>
<dbReference type="GO" id="GO:0016020">
    <property type="term" value="C:membrane"/>
    <property type="evidence" value="ECO:0007669"/>
    <property type="project" value="UniProtKB-SubCell"/>
</dbReference>
<dbReference type="GO" id="GO:0009289">
    <property type="term" value="C:pilus"/>
    <property type="evidence" value="ECO:0007669"/>
    <property type="project" value="UniProtKB-SubCell"/>
</dbReference>
<dbReference type="GO" id="GO:0007155">
    <property type="term" value="P:cell adhesion"/>
    <property type="evidence" value="ECO:0007669"/>
    <property type="project" value="InterPro"/>
</dbReference>
<dbReference type="Gene3D" id="3.30.700.10">
    <property type="entry name" value="Glycoprotein, Type 4 Pilin"/>
    <property type="match status" value="1"/>
</dbReference>
<dbReference type="InterPro" id="IPR012902">
    <property type="entry name" value="N_methyl_site"/>
</dbReference>
<dbReference type="InterPro" id="IPR001082">
    <property type="entry name" value="Pilin"/>
</dbReference>
<dbReference type="InterPro" id="IPR045584">
    <property type="entry name" value="Pilin-like"/>
</dbReference>
<dbReference type="InterPro" id="IPR050470">
    <property type="entry name" value="T4P/T2SS_Core"/>
</dbReference>
<dbReference type="NCBIfam" id="TIGR02532">
    <property type="entry name" value="IV_pilin_GFxxxE"/>
    <property type="match status" value="1"/>
</dbReference>
<dbReference type="PANTHER" id="PTHR30093">
    <property type="entry name" value="GENERAL SECRETION PATHWAY PROTEIN G"/>
    <property type="match status" value="1"/>
</dbReference>
<dbReference type="PANTHER" id="PTHR30093:SF34">
    <property type="entry name" value="PREPILIN PEPTIDASE-DEPENDENT PROTEIN D"/>
    <property type="match status" value="1"/>
</dbReference>
<dbReference type="Pfam" id="PF07963">
    <property type="entry name" value="N_methyl"/>
    <property type="match status" value="1"/>
</dbReference>
<dbReference type="Pfam" id="PF00114">
    <property type="entry name" value="Pilin"/>
    <property type="match status" value="1"/>
</dbReference>
<dbReference type="SUPFAM" id="SSF54523">
    <property type="entry name" value="Pili subunits"/>
    <property type="match status" value="1"/>
</dbReference>
<dbReference type="PROSITE" id="PS00409">
    <property type="entry name" value="PROKAR_NTER_METHYL"/>
    <property type="match status" value="1"/>
</dbReference>
<gene>
    <name type="primary">ecpB</name>
</gene>